<feature type="chain" id="PRO_0000423860" description="K(+)/H(+) antiporter NhaP">
    <location>
        <begin position="1"/>
        <end position="574"/>
    </location>
</feature>
<feature type="transmembrane region" description="Helical" evidence="2">
    <location>
        <begin position="4"/>
        <end position="24"/>
    </location>
</feature>
<feature type="transmembrane region" description="Helical" evidence="2">
    <location>
        <begin position="28"/>
        <end position="48"/>
    </location>
</feature>
<feature type="transmembrane region" description="Helical" evidence="2">
    <location>
        <begin position="56"/>
        <end position="76"/>
    </location>
</feature>
<feature type="transmembrane region" description="Helical" evidence="2">
    <location>
        <begin position="85"/>
        <end position="105"/>
    </location>
</feature>
<feature type="transmembrane region" description="Helical" evidence="2">
    <location>
        <begin position="117"/>
        <end position="139"/>
    </location>
</feature>
<feature type="transmembrane region" description="Helical" evidence="2">
    <location>
        <begin position="170"/>
        <end position="190"/>
    </location>
</feature>
<feature type="transmembrane region" description="Helical" evidence="2">
    <location>
        <begin position="191"/>
        <end position="211"/>
    </location>
</feature>
<feature type="transmembrane region" description="Helical" evidence="2">
    <location>
        <begin position="216"/>
        <end position="236"/>
    </location>
</feature>
<feature type="transmembrane region" description="Helical" evidence="2">
    <location>
        <begin position="244"/>
        <end position="264"/>
    </location>
</feature>
<feature type="transmembrane region" description="Helical" evidence="2">
    <location>
        <begin position="272"/>
        <end position="292"/>
    </location>
</feature>
<feature type="transmembrane region" description="Helical" evidence="2">
    <location>
        <begin position="302"/>
        <end position="322"/>
    </location>
</feature>
<feature type="transmembrane region" description="Helical" evidence="2">
    <location>
        <begin position="332"/>
        <end position="352"/>
    </location>
</feature>
<feature type="transmembrane region" description="Helical" evidence="2">
    <location>
        <begin position="361"/>
        <end position="381"/>
    </location>
</feature>
<feature type="domain" description="RCK C-terminal" evidence="3">
    <location>
        <begin position="402"/>
        <end position="484"/>
    </location>
</feature>
<sequence>MEAINLTILVIGVLFLISIVATLISSRIGAPILLVFLIIGMLAGEQGLGGITFNNPQVAFLIGSIALVIILFDGGMRTHPERFRVALAPAAMLATLGVVVTCTVTGLAAAWILGLHWLQGLLLGAILSSTDAAAVFSIFQSRGIRIKDRVASTLEIESGSNDPMAVMLTITLVGVLAEYTALDWSVLIVFLKQAIIGGAVGYGAGRLFVFLCRKLPLSFAFFPLMAVACCISVYAVTTQFEGSGFLAVYLMGYFVGNARLPQVLYILRVHDGLAWLSQIVMFLMLGLLVVPSQLLDHLLPALAIAGVLIFIARPLAVLLSLIPFHFPAKDQLFISWVGLRGAVPIILALFPWLAGVPDEHLYFNVAFVIVIVSLVFQGWSISPVARWLKLEVPKESGPDQTMPLDAIASNEVIEVVSFTLKGDSPMLDKQWQDFTVPHSAEFLGVIRDGEWLLSRDNPVFKLKDSVLVLCKMADVPDISTVLASAASSRTMTASDFFGDFVLNAQITLDELDAFYSITLPEHESHVTLADYITERFHRRVVVGDQVKLDALVLTVRQLDDHGNVKLVGIKPSDS</sequence>
<name>NHAP_ALKAM</name>
<accession>Q0ZAH6</accession>
<dbReference type="EMBL" id="DQ649020">
    <property type="protein sequence ID" value="ABG37987.1"/>
    <property type="molecule type" value="Genomic_DNA"/>
</dbReference>
<dbReference type="RefSeq" id="WP_091345021.1">
    <property type="nucleotide sequence ID" value="NZ_FNRM01000012.1"/>
</dbReference>
<dbReference type="SMR" id="Q0ZAH6"/>
<dbReference type="STRING" id="152573.SAMN04488051_11215"/>
<dbReference type="TCDB" id="2.A.36.6.4">
    <property type="family name" value="the monovalent cation:proton antiporter-1 (cpa1) family"/>
</dbReference>
<dbReference type="OrthoDB" id="9810759at2"/>
<dbReference type="GO" id="GO:0005886">
    <property type="term" value="C:plasma membrane"/>
    <property type="evidence" value="ECO:0007669"/>
    <property type="project" value="UniProtKB-SubCell"/>
</dbReference>
<dbReference type="GO" id="GO:0015297">
    <property type="term" value="F:antiporter activity"/>
    <property type="evidence" value="ECO:0007669"/>
    <property type="project" value="UniProtKB-KW"/>
</dbReference>
<dbReference type="GO" id="GO:0050660">
    <property type="term" value="F:flavin adenine dinucleotide binding"/>
    <property type="evidence" value="ECO:0007669"/>
    <property type="project" value="InterPro"/>
</dbReference>
<dbReference type="GO" id="GO:0008324">
    <property type="term" value="F:monoatomic cation transmembrane transporter activity"/>
    <property type="evidence" value="ECO:0007669"/>
    <property type="project" value="InterPro"/>
</dbReference>
<dbReference type="GO" id="GO:0006813">
    <property type="term" value="P:potassium ion transport"/>
    <property type="evidence" value="ECO:0007669"/>
    <property type="project" value="UniProtKB-KW"/>
</dbReference>
<dbReference type="GO" id="GO:1902600">
    <property type="term" value="P:proton transmembrane transport"/>
    <property type="evidence" value="ECO:0007669"/>
    <property type="project" value="InterPro"/>
</dbReference>
<dbReference type="Gene3D" id="1.20.1530.20">
    <property type="match status" value="1"/>
</dbReference>
<dbReference type="Gene3D" id="3.30.465.10">
    <property type="match status" value="1"/>
</dbReference>
<dbReference type="Gene3D" id="3.30.70.1450">
    <property type="entry name" value="Regulator of K+ conductance, C-terminal domain"/>
    <property type="match status" value="1"/>
</dbReference>
<dbReference type="InterPro" id="IPR006153">
    <property type="entry name" value="Cation/H_exchanger_TM"/>
</dbReference>
<dbReference type="InterPro" id="IPR036318">
    <property type="entry name" value="FAD-bd_PCMH-like_sf"/>
</dbReference>
<dbReference type="InterPro" id="IPR016169">
    <property type="entry name" value="FAD-bd_PCMH_sub2"/>
</dbReference>
<dbReference type="InterPro" id="IPR038770">
    <property type="entry name" value="Na+/solute_symporter_sf"/>
</dbReference>
<dbReference type="InterPro" id="IPR006037">
    <property type="entry name" value="RCK_C"/>
</dbReference>
<dbReference type="InterPro" id="IPR036721">
    <property type="entry name" value="RCK_C_sf"/>
</dbReference>
<dbReference type="InterPro" id="IPR005170">
    <property type="entry name" value="Transptr-assoc_dom"/>
</dbReference>
<dbReference type="NCBIfam" id="NF003714">
    <property type="entry name" value="PRK05326.1-1"/>
    <property type="match status" value="1"/>
</dbReference>
<dbReference type="NCBIfam" id="NF003715">
    <property type="entry name" value="PRK05326.1-2"/>
    <property type="match status" value="1"/>
</dbReference>
<dbReference type="NCBIfam" id="NF003716">
    <property type="entry name" value="PRK05326.1-3"/>
    <property type="match status" value="1"/>
</dbReference>
<dbReference type="PANTHER" id="PTHR32507:SF7">
    <property type="entry name" value="K(+)_H(+) ANTIPORTER NHAP2"/>
    <property type="match status" value="1"/>
</dbReference>
<dbReference type="PANTHER" id="PTHR32507">
    <property type="entry name" value="NA(+)/H(+) ANTIPORTER 1"/>
    <property type="match status" value="1"/>
</dbReference>
<dbReference type="Pfam" id="PF03471">
    <property type="entry name" value="CorC_HlyC"/>
    <property type="match status" value="1"/>
</dbReference>
<dbReference type="Pfam" id="PF00999">
    <property type="entry name" value="Na_H_Exchanger"/>
    <property type="match status" value="1"/>
</dbReference>
<dbReference type="SMART" id="SM01091">
    <property type="entry name" value="CorC_HlyC"/>
    <property type="match status" value="1"/>
</dbReference>
<dbReference type="SUPFAM" id="SSF56176">
    <property type="entry name" value="FAD-binding/transporter-associated domain-like"/>
    <property type="match status" value="1"/>
</dbReference>
<dbReference type="PROSITE" id="PS51202">
    <property type="entry name" value="RCK_C"/>
    <property type="match status" value="1"/>
</dbReference>
<protein>
    <recommendedName>
        <fullName>K(+)/H(+) antiporter NhaP</fullName>
    </recommendedName>
    <alternativeName>
        <fullName>Potassium/proton antiporter NhaP</fullName>
    </alternativeName>
</protein>
<organism>
    <name type="scientific">Alkalimonas amylolytica</name>
    <dbReference type="NCBI Taxonomy" id="152573"/>
    <lineage>
        <taxon>Bacteria</taxon>
        <taxon>Pseudomonadati</taxon>
        <taxon>Pseudomonadota</taxon>
        <taxon>Gammaproteobacteria</taxon>
        <taxon>Alkalimonas</taxon>
    </lineage>
</organism>
<gene>
    <name type="primary">nhaP</name>
</gene>
<evidence type="ECO:0000250" key="1"/>
<evidence type="ECO:0000255" key="2"/>
<evidence type="ECO:0000255" key="3">
    <source>
        <dbReference type="PROSITE-ProRule" id="PRU00544"/>
    </source>
</evidence>
<evidence type="ECO:0000269" key="4">
    <source>
    </source>
</evidence>
<evidence type="ECO:0000305" key="5"/>
<proteinExistence type="evidence at protein level"/>
<comment type="function">
    <text evidence="4">K(+)/H(+) antiporter that extrudes potassium in exchange for external protons. Can also catalyze NH(4)(+)/H(+) antiport. Could have weak activity with Na(+).</text>
</comment>
<comment type="biophysicochemical properties">
    <kinetics>
        <KM evidence="4">0.5 mM for K(+) (at pH 8.0)</KM>
    </kinetics>
    <phDependence>
        <text evidence="4">Optimum pH is 7.5. Exhibits K(+)/H(+) antiporter activity between pH 7.5 and 9.5.</text>
    </phDependence>
</comment>
<comment type="subcellular location">
    <subcellularLocation>
        <location evidence="1">Cell inner membrane</location>
        <topology evidence="1">Multi-pass membrane protein</topology>
    </subcellularLocation>
</comment>
<comment type="similarity">
    <text evidence="5">Belongs to the monovalent cation:proton antiporter 1 (CPA1) transporter (TC 2.A.36) family.</text>
</comment>
<keyword id="KW-0050">Antiport</keyword>
<keyword id="KW-0997">Cell inner membrane</keyword>
<keyword id="KW-1003">Cell membrane</keyword>
<keyword id="KW-0406">Ion transport</keyword>
<keyword id="KW-0472">Membrane</keyword>
<keyword id="KW-0630">Potassium</keyword>
<keyword id="KW-0633">Potassium transport</keyword>
<keyword id="KW-0812">Transmembrane</keyword>
<keyword id="KW-1133">Transmembrane helix</keyword>
<keyword id="KW-0813">Transport</keyword>
<reference key="1">
    <citation type="journal article" date="2007" name="Microbiology">
        <title>Three putative cation/proton antiporters from the soda lake alkaliphile Alkalimonas amylolytica N10 complement an alkali-sensitive Escherichia coli mutant.</title>
        <authorList>
            <person name="Wei Y."/>
            <person name="Liu J."/>
            <person name="Ma Y."/>
            <person name="Krulwich T.A."/>
        </authorList>
    </citation>
    <scope>NUCLEOTIDE SEQUENCE [GENOMIC DNA]</scope>
    <scope>FUNCTION</scope>
    <scope>BIOPHYSICOCHEMICAL PROPERTIES</scope>
    <scope>GENE NAME</scope>
    <source>
        <strain>DSM 18337 / CGMCC 1.3430 / N10</strain>
    </source>
</reference>